<accession>Q5V5V4</accession>
<proteinExistence type="evidence at transcript level"/>
<evidence type="ECO:0000250" key="1"/>
<evidence type="ECO:0000255" key="2"/>
<evidence type="ECO:0000255" key="3">
    <source>
        <dbReference type="PROSITE-ProRule" id="PRU00102"/>
    </source>
</evidence>
<evidence type="ECO:0000255" key="4">
    <source>
        <dbReference type="PROSITE-ProRule" id="PRU00284"/>
    </source>
</evidence>
<evidence type="ECO:0000256" key="5">
    <source>
        <dbReference type="SAM" id="MobiDB-lite"/>
    </source>
</evidence>
<evidence type="ECO:0000269" key="6">
    <source>
    </source>
</evidence>
<evidence type="ECO:0000305" key="7"/>
<keyword id="KW-0175">Coiled coil</keyword>
<keyword id="KW-0472">Membrane</keyword>
<keyword id="KW-1185">Reference proteome</keyword>
<keyword id="KW-0677">Repeat</keyword>
<keyword id="KW-0807">Transducer</keyword>
<keyword id="KW-0812">Transmembrane</keyword>
<keyword id="KW-1133">Transmembrane helix</keyword>
<name>HTR2_HALMA</name>
<sequence length="773" mass="82593">MDSNRDSPLPSFIAGSYAARLGVALSFAILVIIAAGVLTSVQASATLEEDVADDITALSETQAVQLDDWLTTSRRNVRSTSRLPVFTDGTDTEKQQRLEELRSNEELPPGVVAVHYFDTETSEIRASSNQDFIGVNAAEQGAPFATDPPQFDGPDDTHVTEPFSVSVVDHPIVAVVSPVPGDEDRALVYMIDLREKADQISSHREGSFTTVVNTDGEFVSHPNHSMIGSTAPISQMESDPLGTLEPGQRMFHETDSMLMGLTRLESHDWVVMVHSDREAAYALSDQINSDLIGLILLAVVNLGLIGVTIGGNTIASLRRLSVKAEAMADGELDVDLDTSREDEFGTLYAAFDNMRANLRTQISEAETAKQEAEAAKEQAQAAREDVESERNEMEALTGHLELKAQQYSDALDAAANGDLTARVKTDSMNDAMAEVGEDINTTLDALEDTIADMKAFATNVIQSSDRVNSNAERVDRASKQVSKSINEIFEGTTEQNEGLESAAAEMQNLSATAQQVASSAQQVADTSQSAAKVGEDGREAAQEAIAEMSAIEAETGETVEEINALDDELDEIGEIVGVITSIVEQTNMLALNASIEAAHADGDGEGFAVVADEIKGLAEETKEAAADIEGRIEAIQEQAGDTVETMESTSTRITEGVSTVEETVDALETIVEYTEEVDTGIQEIDRATEEQARTAQDVMGTIDDLTTISQQTATEADTVAGAAQDQSASIEEVSDSATELRQRADDLESLLDRFTVENSAGTGTDSTAAVGDD</sequence>
<reference key="1">
    <citation type="journal article" date="2004" name="Genome Res.">
        <title>Genome sequence of Haloarcula marismortui: a halophilic archaeon from the Dead Sea.</title>
        <authorList>
            <person name="Baliga N.S."/>
            <person name="Bonneau R."/>
            <person name="Facciotti M.T."/>
            <person name="Pan M."/>
            <person name="Glusman G."/>
            <person name="Deutsch E.W."/>
            <person name="Shannon P."/>
            <person name="Chiu Y."/>
            <person name="Weng R.S."/>
            <person name="Gan R.R."/>
            <person name="Hung P."/>
            <person name="Date S.V."/>
            <person name="Marcotte E."/>
            <person name="Hood L."/>
            <person name="Ng W.V."/>
        </authorList>
    </citation>
    <scope>NUCLEOTIDE SEQUENCE [LARGE SCALE GENOMIC DNA]</scope>
    <source>
        <strain>ATCC 43049 / DSM 3752 / JCM 8966 / VKM B-1809</strain>
    </source>
</reference>
<reference key="2">
    <citation type="journal article" date="2010" name="J. Bacteriol.">
        <title>A novel six-rhodopsin system in a single archaeon.</title>
        <authorList>
            <person name="Fu H.Y."/>
            <person name="Lin Y.C."/>
            <person name="Chang Y.N."/>
            <person name="Tseng H."/>
            <person name="Huang C.C."/>
            <person name="Liu K.C."/>
            <person name="Huang C.S."/>
            <person name="Su C.W."/>
            <person name="Weng R.R."/>
            <person name="Lee Y.Y."/>
            <person name="Ng W.V."/>
            <person name="Yang C.S."/>
        </authorList>
    </citation>
    <scope>INDUCTION</scope>
</reference>
<gene>
    <name type="primary">htr2</name>
    <name type="ordered locus">rrnAC0013</name>
</gene>
<comment type="function">
    <text evidence="1">Transduces signals from the phototaxis receptor sensory rhodopsin II (Sop2).</text>
</comment>
<comment type="subcellular location">
    <subcellularLocation>
        <location evidence="7">Membrane</location>
        <topology evidence="7">Multi-pass membrane protein</topology>
    </subcellularLocation>
</comment>
<comment type="induction">
    <text evidence="6">Expressed constitutively throughout the growth phases, both in presence and absence of white light.</text>
</comment>
<comment type="similarity">
    <text evidence="7">Belongs to the methyl-accepting chemotaxis (MCP) protein family.</text>
</comment>
<organism>
    <name type="scientific">Haloarcula marismortui (strain ATCC 43049 / DSM 3752 / JCM 8966 / VKM B-1809)</name>
    <name type="common">Halobacterium marismortui</name>
    <dbReference type="NCBI Taxonomy" id="272569"/>
    <lineage>
        <taxon>Archaea</taxon>
        <taxon>Methanobacteriati</taxon>
        <taxon>Methanobacteriota</taxon>
        <taxon>Stenosarchaea group</taxon>
        <taxon>Halobacteria</taxon>
        <taxon>Halobacteriales</taxon>
        <taxon>Haloarculaceae</taxon>
        <taxon>Haloarcula</taxon>
    </lineage>
</organism>
<dbReference type="EMBL" id="AY596297">
    <property type="protein sequence ID" value="AAV45098.1"/>
    <property type="molecule type" value="Genomic_DNA"/>
</dbReference>
<dbReference type="SMR" id="Q5V5V4"/>
<dbReference type="STRING" id="272569.rrnAC0013"/>
<dbReference type="PaxDb" id="272569-rrnAC0013"/>
<dbReference type="EnsemblBacteria" id="AAV45098">
    <property type="protein sequence ID" value="AAV45098"/>
    <property type="gene ID" value="rrnAC0013"/>
</dbReference>
<dbReference type="KEGG" id="hma:rrnAC0013"/>
<dbReference type="PATRIC" id="fig|272569.17.peg.827"/>
<dbReference type="eggNOG" id="arCOG02320">
    <property type="taxonomic scope" value="Archaea"/>
</dbReference>
<dbReference type="HOGENOM" id="CLU_000445_107_19_2"/>
<dbReference type="Proteomes" id="UP000001169">
    <property type="component" value="Chromosome I"/>
</dbReference>
<dbReference type="GO" id="GO:0016020">
    <property type="term" value="C:membrane"/>
    <property type="evidence" value="ECO:0007669"/>
    <property type="project" value="UniProtKB-SubCell"/>
</dbReference>
<dbReference type="GO" id="GO:0004888">
    <property type="term" value="F:transmembrane signaling receptor activity"/>
    <property type="evidence" value="ECO:0007669"/>
    <property type="project" value="InterPro"/>
</dbReference>
<dbReference type="GO" id="GO:0006935">
    <property type="term" value="P:chemotaxis"/>
    <property type="evidence" value="ECO:0007669"/>
    <property type="project" value="InterPro"/>
</dbReference>
<dbReference type="GO" id="GO:0007165">
    <property type="term" value="P:signal transduction"/>
    <property type="evidence" value="ECO:0007669"/>
    <property type="project" value="UniProtKB-KW"/>
</dbReference>
<dbReference type="CDD" id="cd06225">
    <property type="entry name" value="HAMP"/>
    <property type="match status" value="1"/>
</dbReference>
<dbReference type="CDD" id="cd11386">
    <property type="entry name" value="MCP_signal"/>
    <property type="match status" value="1"/>
</dbReference>
<dbReference type="CDD" id="cd18774">
    <property type="entry name" value="PDC2_HK_sensor"/>
    <property type="match status" value="1"/>
</dbReference>
<dbReference type="Gene3D" id="6.10.250.1910">
    <property type="match status" value="1"/>
</dbReference>
<dbReference type="Gene3D" id="1.10.287.950">
    <property type="entry name" value="Methyl-accepting chemotaxis protein"/>
    <property type="match status" value="1"/>
</dbReference>
<dbReference type="InterPro" id="IPR004090">
    <property type="entry name" value="Chemotax_Me-accpt_rcpt"/>
</dbReference>
<dbReference type="InterPro" id="IPR003660">
    <property type="entry name" value="HAMP_dom"/>
</dbReference>
<dbReference type="InterPro" id="IPR004089">
    <property type="entry name" value="MCPsignal_dom"/>
</dbReference>
<dbReference type="PANTHER" id="PTHR32089:SF112">
    <property type="entry name" value="LYSOZYME-LIKE PROTEIN-RELATED"/>
    <property type="match status" value="1"/>
</dbReference>
<dbReference type="PANTHER" id="PTHR32089">
    <property type="entry name" value="METHYL-ACCEPTING CHEMOTAXIS PROTEIN MCPB"/>
    <property type="match status" value="1"/>
</dbReference>
<dbReference type="Pfam" id="PF00672">
    <property type="entry name" value="HAMP"/>
    <property type="match status" value="1"/>
</dbReference>
<dbReference type="Pfam" id="PF00015">
    <property type="entry name" value="MCPsignal"/>
    <property type="match status" value="1"/>
</dbReference>
<dbReference type="PRINTS" id="PR00260">
    <property type="entry name" value="CHEMTRNSDUCR"/>
</dbReference>
<dbReference type="SMART" id="SM00304">
    <property type="entry name" value="HAMP"/>
    <property type="match status" value="2"/>
</dbReference>
<dbReference type="SMART" id="SM00283">
    <property type="entry name" value="MA"/>
    <property type="match status" value="1"/>
</dbReference>
<dbReference type="SUPFAM" id="SSF158472">
    <property type="entry name" value="HAMP domain-like"/>
    <property type="match status" value="1"/>
</dbReference>
<dbReference type="SUPFAM" id="SSF58104">
    <property type="entry name" value="Methyl-accepting chemotaxis protein (MCP) signaling domain"/>
    <property type="match status" value="1"/>
</dbReference>
<dbReference type="PROSITE" id="PS50111">
    <property type="entry name" value="CHEMOTAXIS_TRANSDUC_2"/>
    <property type="match status" value="1"/>
</dbReference>
<dbReference type="PROSITE" id="PS50885">
    <property type="entry name" value="HAMP"/>
    <property type="match status" value="2"/>
</dbReference>
<protein>
    <recommendedName>
        <fullName>Sensory rhodopsin II transducer</fullName>
    </recommendedName>
    <alternativeName>
        <fullName>MCP domain signal transducer 2</fullName>
        <shortName>HmHtrII</shortName>
    </alternativeName>
</protein>
<feature type="chain" id="PRO_0000428858" description="Sensory rhodopsin II transducer">
    <location>
        <begin position="1"/>
        <end position="773"/>
    </location>
</feature>
<feature type="transmembrane region" description="Helical" evidence="2">
    <location>
        <begin position="21"/>
        <end position="41"/>
    </location>
</feature>
<feature type="transmembrane region" description="Helical" evidence="2">
    <location>
        <begin position="291"/>
        <end position="311"/>
    </location>
</feature>
<feature type="domain" description="HAMP 1" evidence="3">
    <location>
        <begin position="311"/>
        <end position="363"/>
    </location>
</feature>
<feature type="domain" description="HAMP 2" evidence="3">
    <location>
        <begin position="398"/>
        <end position="451"/>
    </location>
</feature>
<feature type="domain" description="Methyl-accepting transducer" evidence="4">
    <location>
        <begin position="470"/>
        <end position="706"/>
    </location>
</feature>
<feature type="region of interest" description="Disordered" evidence="5">
    <location>
        <begin position="717"/>
        <end position="740"/>
    </location>
</feature>
<feature type="coiled-coil region" evidence="2">
    <location>
        <begin position="727"/>
        <end position="760"/>
    </location>
</feature>
<feature type="compositionally biased region" description="Polar residues" evidence="5">
    <location>
        <begin position="724"/>
        <end position="737"/>
    </location>
</feature>